<proteinExistence type="inferred from homology"/>
<protein>
    <recommendedName>
        <fullName>Major prion protein</fullName>
        <shortName>PrP</shortName>
    </recommendedName>
    <cdAntigenName>CD230</cdAntigenName>
</protein>
<sequence length="264" mass="28614">MVKSHIGSWILVLFVAMWSDVGLCKKRPKPGGGWNTGGSRYPGQGSPGGNRYPPQGGGGWGQPHGGGWGQPHGGGWGQPHGGGWGQPHGGGWGQPHGGGGWGQGGTHGQWNKPSKPKTNMKHVAGAAAAGAVVGGLGGYMLGSAMSRPLIHFGSDYEDRYYRENMHRYPNQVYYRPVDQYSNQNNFVHDCVNITVKEHTVTTTTKGENFTETDIKMMERVVEQMCITQYQRESQAYYQRGASVILFSSPPVILLISFLIFLIVG</sequence>
<gene>
    <name type="primary">PRNP</name>
    <name type="synonym">PRP</name>
</gene>
<keyword id="KW-0034">Amyloid</keyword>
<keyword id="KW-1003">Cell membrane</keyword>
<keyword id="KW-0186">Copper</keyword>
<keyword id="KW-1015">Disulfide bond</keyword>
<keyword id="KW-0325">Glycoprotein</keyword>
<keyword id="KW-0333">Golgi apparatus</keyword>
<keyword id="KW-0336">GPI-anchor</keyword>
<keyword id="KW-0449">Lipoprotein</keyword>
<keyword id="KW-0472">Membrane</keyword>
<keyword id="KW-0479">Metal-binding</keyword>
<keyword id="KW-0640">Prion</keyword>
<keyword id="KW-0677">Repeat</keyword>
<keyword id="KW-0732">Signal</keyword>
<keyword id="KW-0862">Zinc</keyword>
<accession>Q5UJI7</accession>
<accession>B6S1J9</accession>
<accession>Q5UK70</accession>
<organism>
    <name type="scientific">Bos indicus</name>
    <name type="common">Zebu</name>
    <dbReference type="NCBI Taxonomy" id="9915"/>
    <lineage>
        <taxon>Eukaryota</taxon>
        <taxon>Metazoa</taxon>
        <taxon>Chordata</taxon>
        <taxon>Craniata</taxon>
        <taxon>Vertebrata</taxon>
        <taxon>Euteleostomi</taxon>
        <taxon>Mammalia</taxon>
        <taxon>Eutheria</taxon>
        <taxon>Laurasiatheria</taxon>
        <taxon>Artiodactyla</taxon>
        <taxon>Ruminantia</taxon>
        <taxon>Pecora</taxon>
        <taxon>Bovidae</taxon>
        <taxon>Bovinae</taxon>
        <taxon>Bos</taxon>
    </lineage>
</organism>
<feature type="signal peptide" evidence="1">
    <location>
        <begin position="1"/>
        <end position="24"/>
    </location>
</feature>
<feature type="chain" id="PRO_0000025623" description="Major prion protein">
    <location>
        <begin position="25"/>
        <end position="241"/>
    </location>
</feature>
<feature type="propeptide" id="PRO_0000025624" description="Removed in mature form" evidence="5">
    <location>
        <begin position="242"/>
        <end position="264"/>
    </location>
</feature>
<feature type="repeat" description="1">
    <location>
        <begin position="54"/>
        <end position="62"/>
    </location>
</feature>
<feature type="repeat" description="2">
    <location>
        <begin position="63"/>
        <end position="70"/>
    </location>
</feature>
<feature type="repeat" description="3">
    <location>
        <begin position="71"/>
        <end position="78"/>
    </location>
</feature>
<feature type="repeat" description="4">
    <location>
        <begin position="79"/>
        <end position="86"/>
    </location>
</feature>
<feature type="repeat" description="5">
    <location>
        <begin position="87"/>
        <end position="94"/>
    </location>
</feature>
<feature type="repeat" description="6">
    <location>
        <begin position="95"/>
        <end position="103"/>
    </location>
</feature>
<feature type="region of interest" description="Interaction with GRB2, ERI3 and SYN1" evidence="4">
    <location>
        <begin position="25"/>
        <end position="241"/>
    </location>
</feature>
<feature type="region of interest" description="Disordered" evidence="6">
    <location>
        <begin position="28"/>
        <end position="119"/>
    </location>
</feature>
<feature type="region of interest" description="6 X 8 AA tandem repeats of P-H-G-G-G-W-G-Q">
    <location>
        <begin position="54"/>
        <end position="103"/>
    </location>
</feature>
<feature type="compositionally biased region" description="Gly residues" evidence="6">
    <location>
        <begin position="55"/>
        <end position="107"/>
    </location>
</feature>
<feature type="binding site" evidence="2">
    <location>
        <position position="72"/>
    </location>
    <ligand>
        <name>Cu(2+)</name>
        <dbReference type="ChEBI" id="CHEBI:29036"/>
        <label>1</label>
    </ligand>
</feature>
<feature type="binding site" evidence="2">
    <location>
        <position position="73"/>
    </location>
    <ligand>
        <name>Cu(2+)</name>
        <dbReference type="ChEBI" id="CHEBI:29036"/>
        <label>1</label>
    </ligand>
</feature>
<feature type="binding site" evidence="2">
    <location>
        <position position="74"/>
    </location>
    <ligand>
        <name>Cu(2+)</name>
        <dbReference type="ChEBI" id="CHEBI:29036"/>
        <label>1</label>
    </ligand>
</feature>
<feature type="binding site" evidence="2">
    <location>
        <position position="80"/>
    </location>
    <ligand>
        <name>Cu(2+)</name>
        <dbReference type="ChEBI" id="CHEBI:29036"/>
        <label>2</label>
    </ligand>
</feature>
<feature type="binding site" evidence="2">
    <location>
        <position position="81"/>
    </location>
    <ligand>
        <name>Cu(2+)</name>
        <dbReference type="ChEBI" id="CHEBI:29036"/>
        <label>2</label>
    </ligand>
</feature>
<feature type="binding site" evidence="2">
    <location>
        <position position="82"/>
    </location>
    <ligand>
        <name>Cu(2+)</name>
        <dbReference type="ChEBI" id="CHEBI:29036"/>
        <label>2</label>
    </ligand>
</feature>
<feature type="binding site" evidence="2">
    <location>
        <position position="88"/>
    </location>
    <ligand>
        <name>Cu(2+)</name>
        <dbReference type="ChEBI" id="CHEBI:29036"/>
        <label>3</label>
    </ligand>
</feature>
<feature type="binding site" evidence="2">
    <location>
        <position position="89"/>
    </location>
    <ligand>
        <name>Cu(2+)</name>
        <dbReference type="ChEBI" id="CHEBI:29036"/>
        <label>3</label>
    </ligand>
</feature>
<feature type="binding site" evidence="2">
    <location>
        <position position="90"/>
    </location>
    <ligand>
        <name>Cu(2+)</name>
        <dbReference type="ChEBI" id="CHEBI:29036"/>
        <label>3</label>
    </ligand>
</feature>
<feature type="binding site" evidence="2">
    <location>
        <position position="96"/>
    </location>
    <ligand>
        <name>Cu(2+)</name>
        <dbReference type="ChEBI" id="CHEBI:29036"/>
        <label>4</label>
    </ligand>
</feature>
<feature type="binding site" evidence="2">
    <location>
        <position position="98"/>
    </location>
    <ligand>
        <name>Cu(2+)</name>
        <dbReference type="ChEBI" id="CHEBI:29036"/>
        <label>4</label>
    </ligand>
</feature>
<feature type="binding site" evidence="2">
    <location>
        <position position="99"/>
    </location>
    <ligand>
        <name>Cu(2+)</name>
        <dbReference type="ChEBI" id="CHEBI:29036"/>
        <label>4</label>
    </ligand>
</feature>
<feature type="lipid moiety-binding region" description="GPI-anchor amidated alanine" evidence="5">
    <location>
        <position position="241"/>
    </location>
</feature>
<feature type="glycosylation site" description="N-linked (GlcNAc...) asparagine" evidence="5">
    <location>
        <position position="192"/>
    </location>
</feature>
<feature type="glycosylation site" description="N-linked (GlcNAc...) asparagine" evidence="5">
    <location>
        <position position="208"/>
    </location>
</feature>
<feature type="disulfide bond" evidence="3">
    <location>
        <begin position="190"/>
        <end position="225"/>
    </location>
</feature>
<feature type="sequence variant" evidence="9">
    <original>K</original>
    <variation>T</variation>
    <location>
        <position position="3"/>
    </location>
</feature>
<feature type="sequence variant" evidence="7 8 9">
    <original>S</original>
    <variation>N</variation>
    <location>
        <position position="154"/>
    </location>
</feature>
<dbReference type="EMBL" id="AY720447">
    <property type="protein sequence ID" value="AAV30254.1"/>
    <property type="molecule type" value="Genomic_DNA"/>
</dbReference>
<dbReference type="EMBL" id="AY720456">
    <property type="protein sequence ID" value="AAV30263.1"/>
    <property type="molecule type" value="Genomic_DNA"/>
</dbReference>
<dbReference type="EMBL" id="AY720457">
    <property type="protein sequence ID" value="AAV30264.1"/>
    <property type="molecule type" value="Genomic_DNA"/>
</dbReference>
<dbReference type="EMBL" id="AY720487">
    <property type="protein sequence ID" value="AAV30294.1"/>
    <property type="molecule type" value="Genomic_DNA"/>
</dbReference>
<dbReference type="EMBL" id="AY720490">
    <property type="protein sequence ID" value="AAV30297.1"/>
    <property type="molecule type" value="Genomic_DNA"/>
</dbReference>
<dbReference type="EMBL" id="AY720491">
    <property type="protein sequence ID" value="AAV30298.1"/>
    <property type="molecule type" value="Genomic_DNA"/>
</dbReference>
<dbReference type="EMBL" id="AY720499">
    <property type="protein sequence ID" value="AAV30306.1"/>
    <property type="molecule type" value="Genomic_DNA"/>
</dbReference>
<dbReference type="EMBL" id="AY720500">
    <property type="protein sequence ID" value="AAV30307.1"/>
    <property type="molecule type" value="Genomic_DNA"/>
</dbReference>
<dbReference type="EMBL" id="AY720501">
    <property type="protein sequence ID" value="AAV30308.1"/>
    <property type="molecule type" value="Genomic_DNA"/>
</dbReference>
<dbReference type="EMBL" id="AY720502">
    <property type="protein sequence ID" value="AAV30309.1"/>
    <property type="molecule type" value="Genomic_DNA"/>
</dbReference>
<dbReference type="EMBL" id="AY720515">
    <property type="protein sequence ID" value="AAV30322.1"/>
    <property type="molecule type" value="Genomic_DNA"/>
</dbReference>
<dbReference type="EMBL" id="AY720516">
    <property type="protein sequence ID" value="AAV30323.1"/>
    <property type="molecule type" value="Genomic_DNA"/>
</dbReference>
<dbReference type="EMBL" id="AY720517">
    <property type="protein sequence ID" value="AAV30324.1"/>
    <property type="molecule type" value="Genomic_DNA"/>
</dbReference>
<dbReference type="EMBL" id="AY720518">
    <property type="protein sequence ID" value="AAV30325.1"/>
    <property type="molecule type" value="Genomic_DNA"/>
</dbReference>
<dbReference type="EMBL" id="AY720519">
    <property type="protein sequence ID" value="AAV30326.1"/>
    <property type="molecule type" value="Genomic_DNA"/>
</dbReference>
<dbReference type="EMBL" id="AY720520">
    <property type="protein sequence ID" value="AAV30327.1"/>
    <property type="molecule type" value="Genomic_DNA"/>
</dbReference>
<dbReference type="EMBL" id="AY720521">
    <property type="protein sequence ID" value="AAV30328.1"/>
    <property type="molecule type" value="Genomic_DNA"/>
</dbReference>
<dbReference type="EMBL" id="AY720522">
    <property type="protein sequence ID" value="AAV30329.1"/>
    <property type="molecule type" value="Genomic_DNA"/>
</dbReference>
<dbReference type="EMBL" id="AY720523">
    <property type="protein sequence ID" value="AAV30330.1"/>
    <property type="molecule type" value="Genomic_DNA"/>
</dbReference>
<dbReference type="EMBL" id="AY720524">
    <property type="protein sequence ID" value="AAV30331.1"/>
    <property type="molecule type" value="Genomic_DNA"/>
</dbReference>
<dbReference type="EMBL" id="AY720526">
    <property type="protein sequence ID" value="AAV30333.1"/>
    <property type="molecule type" value="Genomic_DNA"/>
</dbReference>
<dbReference type="EMBL" id="AY720527">
    <property type="protein sequence ID" value="AAV30334.1"/>
    <property type="molecule type" value="Genomic_DNA"/>
</dbReference>
<dbReference type="EMBL" id="AY720528">
    <property type="protein sequence ID" value="AAV30335.1"/>
    <property type="molecule type" value="Genomic_DNA"/>
</dbReference>
<dbReference type="EMBL" id="AY720529">
    <property type="protein sequence ID" value="AAV30336.1"/>
    <property type="molecule type" value="Genomic_DNA"/>
</dbReference>
<dbReference type="EMBL" id="AY720536">
    <property type="protein sequence ID" value="AAV30343.1"/>
    <property type="molecule type" value="Genomic_DNA"/>
</dbReference>
<dbReference type="EMBL" id="AY720537">
    <property type="protein sequence ID" value="AAV30344.1"/>
    <property type="molecule type" value="Genomic_DNA"/>
</dbReference>
<dbReference type="EMBL" id="AY720538">
    <property type="protein sequence ID" value="AAV30345.1"/>
    <property type="molecule type" value="Genomic_DNA"/>
</dbReference>
<dbReference type="EMBL" id="AY720539">
    <property type="protein sequence ID" value="AAV30346.1"/>
    <property type="molecule type" value="Genomic_DNA"/>
</dbReference>
<dbReference type="EMBL" id="AY720542">
    <property type="protein sequence ID" value="AAV30349.1"/>
    <property type="molecule type" value="Genomic_DNA"/>
</dbReference>
<dbReference type="EMBL" id="AY720543">
    <property type="protein sequence ID" value="AAV30350.1"/>
    <property type="molecule type" value="Genomic_DNA"/>
</dbReference>
<dbReference type="EMBL" id="AY720575">
    <property type="protein sequence ID" value="AAV30382.1"/>
    <property type="molecule type" value="Genomic_DNA"/>
</dbReference>
<dbReference type="EMBL" id="AY720576">
    <property type="protein sequence ID" value="AAV30383.1"/>
    <property type="molecule type" value="Genomic_DNA"/>
</dbReference>
<dbReference type="EMBL" id="AY720577">
    <property type="protein sequence ID" value="AAV30384.1"/>
    <property type="molecule type" value="Genomic_DNA"/>
</dbReference>
<dbReference type="EMBL" id="AY720578">
    <property type="protein sequence ID" value="AAV30385.1"/>
    <property type="molecule type" value="Genomic_DNA"/>
</dbReference>
<dbReference type="EMBL" id="AY720579">
    <property type="protein sequence ID" value="AAV30386.1"/>
    <property type="molecule type" value="Genomic_DNA"/>
</dbReference>
<dbReference type="EMBL" id="AY720580">
    <property type="protein sequence ID" value="AAV30387.1"/>
    <property type="molecule type" value="Genomic_DNA"/>
</dbReference>
<dbReference type="EMBL" id="AY720586">
    <property type="protein sequence ID" value="AAV30393.1"/>
    <property type="molecule type" value="Genomic_DNA"/>
</dbReference>
<dbReference type="EMBL" id="AY720587">
    <property type="protein sequence ID" value="AAV30394.1"/>
    <property type="molecule type" value="Genomic_DNA"/>
</dbReference>
<dbReference type="EMBL" id="AY720589">
    <property type="protein sequence ID" value="AAV30396.1"/>
    <property type="molecule type" value="Genomic_DNA"/>
</dbReference>
<dbReference type="EMBL" id="AY720590">
    <property type="protein sequence ID" value="AAV30397.1"/>
    <property type="molecule type" value="Genomic_DNA"/>
</dbReference>
<dbReference type="EMBL" id="AY720592">
    <property type="protein sequence ID" value="AAV30399.1"/>
    <property type="molecule type" value="Genomic_DNA"/>
</dbReference>
<dbReference type="EMBL" id="AY720593">
    <property type="protein sequence ID" value="AAV30400.1"/>
    <property type="molecule type" value="Genomic_DNA"/>
</dbReference>
<dbReference type="EMBL" id="AY720614">
    <property type="protein sequence ID" value="AAV30421.1"/>
    <property type="molecule type" value="Genomic_DNA"/>
</dbReference>
<dbReference type="EMBL" id="AY720615">
    <property type="protein sequence ID" value="AAV30422.1"/>
    <property type="molecule type" value="Genomic_DNA"/>
</dbReference>
<dbReference type="EMBL" id="AY720616">
    <property type="protein sequence ID" value="AAV30423.1"/>
    <property type="molecule type" value="Genomic_DNA"/>
</dbReference>
<dbReference type="EMBL" id="AY720617">
    <property type="protein sequence ID" value="AAV30424.1"/>
    <property type="molecule type" value="Genomic_DNA"/>
</dbReference>
<dbReference type="EMBL" id="AY720618">
    <property type="protein sequence ID" value="AAV30425.1"/>
    <property type="molecule type" value="Genomic_DNA"/>
</dbReference>
<dbReference type="EMBL" id="AY720619">
    <property type="protein sequence ID" value="AAV30426.1"/>
    <property type="molecule type" value="Genomic_DNA"/>
</dbReference>
<dbReference type="EMBL" id="AY720620">
    <property type="protein sequence ID" value="AAV30427.1"/>
    <property type="molecule type" value="Genomic_DNA"/>
</dbReference>
<dbReference type="EMBL" id="AY720621">
    <property type="protein sequence ID" value="AAV30428.1"/>
    <property type="molecule type" value="Genomic_DNA"/>
</dbReference>
<dbReference type="EMBL" id="AY720638">
    <property type="protein sequence ID" value="AAV30445.1"/>
    <property type="molecule type" value="Genomic_DNA"/>
</dbReference>
<dbReference type="EMBL" id="AY720639">
    <property type="protein sequence ID" value="AAV30446.1"/>
    <property type="molecule type" value="Genomic_DNA"/>
</dbReference>
<dbReference type="EMBL" id="AY720646">
    <property type="protein sequence ID" value="AAV30453.1"/>
    <property type="molecule type" value="Genomic_DNA"/>
</dbReference>
<dbReference type="EMBL" id="AY720647">
    <property type="protein sequence ID" value="AAV30454.1"/>
    <property type="molecule type" value="Genomic_DNA"/>
</dbReference>
<dbReference type="EMBL" id="AY720658">
    <property type="protein sequence ID" value="AAV30465.1"/>
    <property type="molecule type" value="Genomic_DNA"/>
</dbReference>
<dbReference type="EMBL" id="AY720659">
    <property type="protein sequence ID" value="AAV30466.1"/>
    <property type="molecule type" value="Genomic_DNA"/>
</dbReference>
<dbReference type="EMBL" id="AY720660">
    <property type="protein sequence ID" value="AAV30467.1"/>
    <property type="molecule type" value="Genomic_DNA"/>
</dbReference>
<dbReference type="EMBL" id="AY720661">
    <property type="protein sequence ID" value="AAV30468.1"/>
    <property type="molecule type" value="Genomic_DNA"/>
</dbReference>
<dbReference type="EMBL" id="AY720665">
    <property type="protein sequence ID" value="AAV30472.1"/>
    <property type="molecule type" value="Genomic_DNA"/>
</dbReference>
<dbReference type="EMBL" id="AY720666">
    <property type="protein sequence ID" value="AAV30473.1"/>
    <property type="molecule type" value="Genomic_DNA"/>
</dbReference>
<dbReference type="EMBL" id="AY720679">
    <property type="protein sequence ID" value="AAV30486.1"/>
    <property type="molecule type" value="Genomic_DNA"/>
</dbReference>
<dbReference type="EMBL" id="AY720680">
    <property type="protein sequence ID" value="AAV30487.1"/>
    <property type="molecule type" value="Genomic_DNA"/>
</dbReference>
<dbReference type="EMBL" id="AY720681">
    <property type="protein sequence ID" value="AAV30488.1"/>
    <property type="molecule type" value="Genomic_DNA"/>
</dbReference>
<dbReference type="EMBL" id="AY720682">
    <property type="protein sequence ID" value="AAV30489.1"/>
    <property type="molecule type" value="Genomic_DNA"/>
</dbReference>
<dbReference type="EMBL" id="EU564451">
    <property type="protein sequence ID" value="ACE73930.1"/>
    <property type="molecule type" value="Genomic_DNA"/>
</dbReference>
<dbReference type="EMBL" id="EU564452">
    <property type="protein sequence ID" value="ACE73931.1"/>
    <property type="molecule type" value="Genomic_DNA"/>
</dbReference>
<dbReference type="EMBL" id="EU564453">
    <property type="protein sequence ID" value="ACE73932.1"/>
    <property type="molecule type" value="Genomic_DNA"/>
</dbReference>
<dbReference type="EMBL" id="EU564454">
    <property type="protein sequence ID" value="ACE73933.1"/>
    <property type="molecule type" value="Genomic_DNA"/>
</dbReference>
<dbReference type="EMBL" id="EU564455">
    <property type="protein sequence ID" value="ACE73934.1"/>
    <property type="molecule type" value="Genomic_DNA"/>
</dbReference>
<dbReference type="EMBL" id="EU564456">
    <property type="protein sequence ID" value="ACE73935.1"/>
    <property type="molecule type" value="Genomic_DNA"/>
</dbReference>
<dbReference type="EMBL" id="EU564457">
    <property type="protein sequence ID" value="ACE73936.1"/>
    <property type="molecule type" value="Genomic_DNA"/>
</dbReference>
<dbReference type="EMBL" id="EU564458">
    <property type="protein sequence ID" value="ACE73937.1"/>
    <property type="molecule type" value="Genomic_DNA"/>
</dbReference>
<dbReference type="EMBL" id="EU564459">
    <property type="protein sequence ID" value="ACE73938.1"/>
    <property type="molecule type" value="Genomic_DNA"/>
</dbReference>
<dbReference type="EMBL" id="EU564460">
    <property type="protein sequence ID" value="ACE73939.1"/>
    <property type="molecule type" value="Genomic_DNA"/>
</dbReference>
<dbReference type="EMBL" id="EU564461">
    <property type="protein sequence ID" value="ACE73940.1"/>
    <property type="molecule type" value="Genomic_DNA"/>
</dbReference>
<dbReference type="EMBL" id="EU564462">
    <property type="protein sequence ID" value="ACE73941.1"/>
    <property type="molecule type" value="Genomic_DNA"/>
</dbReference>
<dbReference type="EMBL" id="EU564463">
    <property type="protein sequence ID" value="ACE73942.1"/>
    <property type="molecule type" value="Genomic_DNA"/>
</dbReference>
<dbReference type="EMBL" id="EU564464">
    <property type="protein sequence ID" value="ACE73943.1"/>
    <property type="molecule type" value="Genomic_DNA"/>
</dbReference>
<dbReference type="EMBL" id="EU564465">
    <property type="protein sequence ID" value="ACE73944.1"/>
    <property type="molecule type" value="Genomic_DNA"/>
</dbReference>
<dbReference type="EMBL" id="EU564466">
    <property type="protein sequence ID" value="ACE73945.1"/>
    <property type="molecule type" value="Genomic_DNA"/>
</dbReference>
<dbReference type="EMBL" id="EU564467">
    <property type="protein sequence ID" value="ACE73946.1"/>
    <property type="molecule type" value="Genomic_DNA"/>
</dbReference>
<dbReference type="EMBL" id="EU564468">
    <property type="protein sequence ID" value="ACE73947.1"/>
    <property type="molecule type" value="Genomic_DNA"/>
</dbReference>
<dbReference type="EMBL" id="EU564469">
    <property type="protein sequence ID" value="ACE73948.1"/>
    <property type="molecule type" value="Genomic_DNA"/>
</dbReference>
<dbReference type="EMBL" id="EU564470">
    <property type="protein sequence ID" value="ACE73949.1"/>
    <property type="molecule type" value="Genomic_DNA"/>
</dbReference>
<dbReference type="EMBL" id="EU564471">
    <property type="protein sequence ID" value="ACE73950.1"/>
    <property type="molecule type" value="Genomic_DNA"/>
</dbReference>
<dbReference type="EMBL" id="EU564472">
    <property type="protein sequence ID" value="ACE73951.1"/>
    <property type="molecule type" value="Genomic_DNA"/>
</dbReference>
<dbReference type="EMBL" id="EU564473">
    <property type="protein sequence ID" value="ACE73952.1"/>
    <property type="molecule type" value="Genomic_DNA"/>
</dbReference>
<dbReference type="EMBL" id="EU564474">
    <property type="protein sequence ID" value="ACE73953.1"/>
    <property type="molecule type" value="Genomic_DNA"/>
</dbReference>
<dbReference type="EMBL" id="EU564475">
    <property type="protein sequence ID" value="ACE73954.1"/>
    <property type="molecule type" value="Genomic_DNA"/>
</dbReference>
<dbReference type="EMBL" id="EU564476">
    <property type="protein sequence ID" value="ACE73955.1"/>
    <property type="molecule type" value="Genomic_DNA"/>
</dbReference>
<dbReference type="EMBL" id="EU564477">
    <property type="protein sequence ID" value="ACE73956.1"/>
    <property type="molecule type" value="Genomic_DNA"/>
</dbReference>
<dbReference type="EMBL" id="EU564478">
    <property type="protein sequence ID" value="ACE73957.1"/>
    <property type="molecule type" value="Genomic_DNA"/>
</dbReference>
<dbReference type="EMBL" id="EU564479">
    <property type="protein sequence ID" value="ACE73958.1"/>
    <property type="molecule type" value="Genomic_DNA"/>
</dbReference>
<dbReference type="EMBL" id="EU564480">
    <property type="protein sequence ID" value="ACE73959.1"/>
    <property type="molecule type" value="Genomic_DNA"/>
</dbReference>
<dbReference type="EMBL" id="EU564481">
    <property type="protein sequence ID" value="ACE73960.1"/>
    <property type="molecule type" value="Genomic_DNA"/>
</dbReference>
<dbReference type="EMBL" id="EU564482">
    <property type="protein sequence ID" value="ACE73961.1"/>
    <property type="molecule type" value="Genomic_DNA"/>
</dbReference>
<dbReference type="EMBL" id="EU564483">
    <property type="protein sequence ID" value="ACE73962.1"/>
    <property type="molecule type" value="Genomic_DNA"/>
</dbReference>
<dbReference type="EMBL" id="EU564484">
    <property type="protein sequence ID" value="ACE73963.1"/>
    <property type="molecule type" value="Genomic_DNA"/>
</dbReference>
<dbReference type="EMBL" id="EU564485">
    <property type="protein sequence ID" value="ACE73964.1"/>
    <property type="molecule type" value="Genomic_DNA"/>
</dbReference>
<dbReference type="EMBL" id="EU564486">
    <property type="protein sequence ID" value="ACE73965.1"/>
    <property type="molecule type" value="Genomic_DNA"/>
</dbReference>
<dbReference type="EMBL" id="EU564487">
    <property type="protein sequence ID" value="ACE73966.1"/>
    <property type="molecule type" value="Genomic_DNA"/>
</dbReference>
<dbReference type="EMBL" id="EU564488">
    <property type="protein sequence ID" value="ACE73967.1"/>
    <property type="molecule type" value="Genomic_DNA"/>
</dbReference>
<dbReference type="EMBL" id="EU564489">
    <property type="protein sequence ID" value="ACE73968.1"/>
    <property type="molecule type" value="Genomic_DNA"/>
</dbReference>
<dbReference type="EMBL" id="EU564490">
    <property type="protein sequence ID" value="ACE73969.1"/>
    <property type="molecule type" value="Genomic_DNA"/>
</dbReference>
<dbReference type="EMBL" id="EU564491">
    <property type="protein sequence ID" value="ACE73970.1"/>
    <property type="molecule type" value="Genomic_DNA"/>
</dbReference>
<dbReference type="EMBL" id="EU564492">
    <property type="protein sequence ID" value="ACE73971.1"/>
    <property type="molecule type" value="Genomic_DNA"/>
</dbReference>
<dbReference type="EMBL" id="EU564493">
    <property type="protein sequence ID" value="ACE73972.1"/>
    <property type="molecule type" value="Genomic_DNA"/>
</dbReference>
<dbReference type="EMBL" id="EU564494">
    <property type="protein sequence ID" value="ACE73973.1"/>
    <property type="molecule type" value="Genomic_DNA"/>
</dbReference>
<dbReference type="EMBL" id="EU564495">
    <property type="protein sequence ID" value="ACE73974.1"/>
    <property type="molecule type" value="Genomic_DNA"/>
</dbReference>
<dbReference type="EMBL" id="EU564496">
    <property type="protein sequence ID" value="ACE73975.1"/>
    <property type="molecule type" value="Genomic_DNA"/>
</dbReference>
<dbReference type="EMBL" id="EU564497">
    <property type="protein sequence ID" value="ACE73976.1"/>
    <property type="molecule type" value="Genomic_DNA"/>
</dbReference>
<dbReference type="EMBL" id="EU564498">
    <property type="protein sequence ID" value="ACE73977.1"/>
    <property type="molecule type" value="Genomic_DNA"/>
</dbReference>
<dbReference type="EMBL" id="EU564499">
    <property type="protein sequence ID" value="ACE73978.1"/>
    <property type="molecule type" value="Genomic_DNA"/>
</dbReference>
<dbReference type="EMBL" id="EU564500">
    <property type="protein sequence ID" value="ACE73979.1"/>
    <property type="molecule type" value="Genomic_DNA"/>
</dbReference>
<dbReference type="EMBL" id="EU564501">
    <property type="protein sequence ID" value="ACE73980.1"/>
    <property type="molecule type" value="Genomic_DNA"/>
</dbReference>
<dbReference type="EMBL" id="EU564502">
    <property type="protein sequence ID" value="ACE73981.1"/>
    <property type="molecule type" value="Genomic_DNA"/>
</dbReference>
<dbReference type="EMBL" id="EU564503">
    <property type="protein sequence ID" value="ACE73982.1"/>
    <property type="molecule type" value="Genomic_DNA"/>
</dbReference>
<dbReference type="EMBL" id="EU564504">
    <property type="protein sequence ID" value="ACE73983.1"/>
    <property type="molecule type" value="Genomic_DNA"/>
</dbReference>
<dbReference type="EMBL" id="EU564505">
    <property type="protein sequence ID" value="ACE73984.1"/>
    <property type="molecule type" value="Genomic_DNA"/>
</dbReference>
<dbReference type="EMBL" id="EU564506">
    <property type="protein sequence ID" value="ACE73985.1"/>
    <property type="molecule type" value="Genomic_DNA"/>
</dbReference>
<dbReference type="EMBL" id="EU564528">
    <property type="protein sequence ID" value="ACE74007.1"/>
    <property type="molecule type" value="Genomic_DNA"/>
</dbReference>
<dbReference type="EMBL" id="AB534902">
    <property type="protein sequence ID" value="BAI49999.1"/>
    <property type="molecule type" value="Genomic_DNA"/>
</dbReference>
<dbReference type="EMBL" id="AB534904">
    <property type="protein sequence ID" value="BAI50001.1"/>
    <property type="molecule type" value="Genomic_DNA"/>
</dbReference>
<dbReference type="EMBL" id="AB534905">
    <property type="protein sequence ID" value="BAI50002.1"/>
    <property type="molecule type" value="Genomic_DNA"/>
</dbReference>
<dbReference type="RefSeq" id="XP_019828908.2">
    <property type="nucleotide sequence ID" value="XM_019973349.2"/>
</dbReference>
<dbReference type="RefSeq" id="XP_019828909.2">
    <property type="nucleotide sequence ID" value="XM_019973350.2"/>
</dbReference>
<dbReference type="SMR" id="Q5UJI7"/>
<dbReference type="GlyCosmos" id="Q5UJI7">
    <property type="glycosylation" value="2 sites, No reported glycans"/>
</dbReference>
<dbReference type="GeneID" id="109568114"/>
<dbReference type="GO" id="GO:0005794">
    <property type="term" value="C:Golgi apparatus"/>
    <property type="evidence" value="ECO:0007669"/>
    <property type="project" value="UniProtKB-SubCell"/>
</dbReference>
<dbReference type="GO" id="GO:0005886">
    <property type="term" value="C:plasma membrane"/>
    <property type="evidence" value="ECO:0007669"/>
    <property type="project" value="UniProtKB-SubCell"/>
</dbReference>
<dbReference type="GO" id="GO:0098552">
    <property type="term" value="C:side of membrane"/>
    <property type="evidence" value="ECO:0007669"/>
    <property type="project" value="UniProtKB-KW"/>
</dbReference>
<dbReference type="GO" id="GO:0005507">
    <property type="term" value="F:copper ion binding"/>
    <property type="evidence" value="ECO:0000250"/>
    <property type="project" value="UniProtKB"/>
</dbReference>
<dbReference type="GO" id="GO:0051260">
    <property type="term" value="P:protein homooligomerization"/>
    <property type="evidence" value="ECO:0007669"/>
    <property type="project" value="InterPro"/>
</dbReference>
<dbReference type="FunFam" id="1.10.790.10:FF:000001">
    <property type="entry name" value="Major prion protein"/>
    <property type="match status" value="1"/>
</dbReference>
<dbReference type="Gene3D" id="1.10.790.10">
    <property type="entry name" value="Prion/Doppel protein, beta-ribbon domain"/>
    <property type="match status" value="1"/>
</dbReference>
<dbReference type="InterPro" id="IPR000817">
    <property type="entry name" value="Prion"/>
</dbReference>
<dbReference type="InterPro" id="IPR036924">
    <property type="entry name" value="Prion/Doppel_b-ribbon_dom_sf"/>
</dbReference>
<dbReference type="InterPro" id="IPR022416">
    <property type="entry name" value="Prion/Doppel_prot_b-ribbon_dom"/>
</dbReference>
<dbReference type="InterPro" id="IPR020949">
    <property type="entry name" value="Prion_copper_b_octapeptide"/>
</dbReference>
<dbReference type="InterPro" id="IPR025860">
    <property type="entry name" value="Prion_N"/>
</dbReference>
<dbReference type="PANTHER" id="PTHR15506">
    <property type="entry name" value="DOPPEL PRION"/>
    <property type="match status" value="1"/>
</dbReference>
<dbReference type="PANTHER" id="PTHR15506:SF2">
    <property type="entry name" value="MAJOR PRION PROTEIN"/>
    <property type="match status" value="1"/>
</dbReference>
<dbReference type="Pfam" id="PF00377">
    <property type="entry name" value="Prion"/>
    <property type="match status" value="1"/>
</dbReference>
<dbReference type="Pfam" id="PF11587">
    <property type="entry name" value="Prion_bPrPp"/>
    <property type="match status" value="1"/>
</dbReference>
<dbReference type="Pfam" id="PF03991">
    <property type="entry name" value="Prion_octapep"/>
    <property type="match status" value="1"/>
</dbReference>
<dbReference type="PRINTS" id="PR00341">
    <property type="entry name" value="PRION"/>
</dbReference>
<dbReference type="SMART" id="SM00157">
    <property type="entry name" value="PRP"/>
    <property type="match status" value="1"/>
</dbReference>
<dbReference type="SUPFAM" id="SSF54098">
    <property type="entry name" value="Prion-like"/>
    <property type="match status" value="1"/>
</dbReference>
<dbReference type="PROSITE" id="PS00291">
    <property type="entry name" value="PRION_1"/>
    <property type="match status" value="1"/>
</dbReference>
<dbReference type="PROSITE" id="PS00706">
    <property type="entry name" value="PRION_2"/>
    <property type="match status" value="1"/>
</dbReference>
<reference key="1">
    <citation type="journal article" date="2004" name="Proc. Natl. Acad. Sci. U.S.A.">
        <title>Prion protein gene (PRNP) variants and evidence for strong purifying selection in functionally important regions of bovine exon 3.</title>
        <authorList>
            <person name="Seabury C.M."/>
            <person name="Honeycutt R.L."/>
            <person name="Rooney A.P."/>
            <person name="Halbert N.D."/>
            <person name="Derr J.N."/>
        </authorList>
    </citation>
    <scope>NUCLEOTIDE SEQUENCE [GENOMIC DNA]</scope>
    <scope>VARIANT ASN-154</scope>
</reference>
<reference key="2">
    <citation type="journal article" date="2008" name="BMC Vet. Res.">
        <title>Frequencies of polymorphisms associated with BSE resistance differ significantly between Bos taurus, Bos indicus, and composite cattle.</title>
        <authorList>
            <person name="Brunelle B.W."/>
            <person name="Greenlee J.J."/>
            <person name="Seabury C.M."/>
            <person name="Brown C.E. II"/>
            <person name="Nicholson E.M."/>
        </authorList>
    </citation>
    <scope>NUCLEOTIDE SEQUENCE [GENOMIC DNA]</scope>
    <scope>VARIANT ASN-154</scope>
</reference>
<reference key="3">
    <citation type="journal article" date="2010" name="Biochem. Genet.">
        <title>Allele distributions and frequencies of the six prion protein gene (PRNP) polymorphisms in Asian native cattle, Japanese breeds, and mythun (Bos frontalis).</title>
        <authorList>
            <person name="Shimogiri T."/>
            <person name="Msalya G."/>
            <person name="Myint S.L."/>
            <person name="Okamoto S."/>
            <person name="Kawabe K."/>
            <person name="Tanaka K."/>
            <person name="Mannen H."/>
            <person name="Minezawa M."/>
            <person name="Namikawa T."/>
            <person name="Amano T."/>
            <person name="Yamamoto Y."/>
            <person name="Maeda Y."/>
        </authorList>
    </citation>
    <scope>NUCLEOTIDE SEQUENCE [GENOMIC DNA]</scope>
    <scope>VARIANTS THR-3 AND ASN-154</scope>
</reference>
<name>PRIO_BOSIN</name>
<comment type="function">
    <text evidence="2 4">Its primary physiological function is unclear. Has cytoprotective activity against internal or environmental stresses. May play a role in neuronal development and synaptic plasticity. May be required for neuronal myelin sheath maintenance. May play a role in iron uptake and iron homeostasis. Soluble oligomers are toxic to cultured neuroblastoma cells and induce apoptosis (in vitro). Association with GPC1 (via its heparan sulfate chains) targets PRNP to lipid rafts. Also provides Cu(2+) or Zn(2+) for the ascorbate-mediated GPC1 deaminase degradation of its heparan sulfate side chains (By similarity).</text>
</comment>
<comment type="subunit">
    <text evidence="2 4">Monomer and homodimer. Has a tendency to aggregate into amyloid fibrils containing a cross-beta spine, formed by a steric zipper of superposed beta-strands. Soluble oligomers may represent an intermediate stage on the path to fibril formation. Copper binding may promote oligomerization. Interacts with GRB2, APP, ERI3/PRNPIP and SYN1. Mislocalized cytosolically exposed PrP interacts with MGRN1; this interaction alters MGRN1 subcellular location and causes lysosomal enlargement. Interacts with KIAA1191.</text>
</comment>
<comment type="subcellular location">
    <subcellularLocation>
        <location evidence="2">Cell membrane</location>
        <topology evidence="2">Lipid-anchor</topology>
        <topology evidence="2">GPI-anchor</topology>
    </subcellularLocation>
    <subcellularLocation>
        <location evidence="4">Golgi apparatus</location>
    </subcellularLocation>
    <text evidence="2">Targeted to lipid rafts via association with the heparan sulfate chains of GPC1. Colocates, in the presence of Cu(2+), to vesicles in para- and perinuclear regions, where both proteins undergo internalization. Heparin displaces PRNP from lipid rafts and promotes endocytosis.</text>
</comment>
<comment type="domain">
    <text evidence="2">The normal, monomeric form has a mainly alpha-helical structure. The disease-associated, protease-resistant form forms amyloid fibrils containing a cross-beta spine, formed by a steric zipper of superposed beta-strands. Disease mutations may favor intermolecular contacts via short beta strands, and may thereby trigger oligomerization.</text>
</comment>
<comment type="domain">
    <text evidence="2">Contains an N-terminal region composed of octamer repeats. At low copper concentrations, the sidechains of His residues from three or four repeats contribute to the binding of a single copper ion. Alternatively, a copper ion can be bound by interaction with the sidechain and backbone amide nitrogen of a single His residue. The observed copper binding stoichiometry suggests that two repeat regions cooperate to stabilize the binding of a single copper ion. At higher copper concentrations, each octamer can bind one copper ion by interactions with the His sidechain and Gly backbone atoms. A mixture of binding types may occur, especially in the case of octamer repeat expansion. Copper binding may stabilize the conformation of this region and may promote oligomerization.</text>
</comment>
<comment type="disease">
    <text evidence="10">Variations in PRNP are responsible of transmissible bovine spongiform encephalopathies (BSE), a class of neurodegenerative diseases that affect various mammals. These diseases are caused by abnormally folded prion proteins. BSE can be subdivided into at least three groups: classical, H-type and L-type, with the latter 2 collectively referred to as atypical BSE. Susceptibility or resistance to a BSE disease can be influenced by at least 3 factors related to the host prion protein: protein expression levels, number of octapeptide repeats, and specific polymorphisms. In cattle, as in humans, BSEs can occur as infectious, spontaneous and genetic diseases.</text>
</comment>
<comment type="similarity">
    <text evidence="10">Belongs to the prion family.</text>
</comment>
<evidence type="ECO:0000250" key="1"/>
<evidence type="ECO:0000250" key="2">
    <source>
        <dbReference type="UniProtKB" id="P04156"/>
    </source>
</evidence>
<evidence type="ECO:0000250" key="3">
    <source>
        <dbReference type="UniProtKB" id="P04273"/>
    </source>
</evidence>
<evidence type="ECO:0000250" key="4">
    <source>
        <dbReference type="UniProtKB" id="P04925"/>
    </source>
</evidence>
<evidence type="ECO:0000255" key="5"/>
<evidence type="ECO:0000256" key="6">
    <source>
        <dbReference type="SAM" id="MobiDB-lite"/>
    </source>
</evidence>
<evidence type="ECO:0000269" key="7">
    <source>
    </source>
</evidence>
<evidence type="ECO:0000269" key="8">
    <source>
    </source>
</evidence>
<evidence type="ECO:0000269" key="9">
    <source>
    </source>
</evidence>
<evidence type="ECO:0000305" key="10"/>